<accession>B1ISR9</accession>
<dbReference type="EMBL" id="CP000946">
    <property type="protein sequence ID" value="ACA77919.1"/>
    <property type="molecule type" value="Genomic_DNA"/>
</dbReference>
<dbReference type="RefSeq" id="WP_000387388.1">
    <property type="nucleotide sequence ID" value="NZ_MTFT01000016.1"/>
</dbReference>
<dbReference type="SMR" id="B1ISR9"/>
<dbReference type="GeneID" id="93775479"/>
<dbReference type="KEGG" id="ecl:EcolC_2283"/>
<dbReference type="HOGENOM" id="CLU_007127_2_0_6"/>
<dbReference type="GO" id="GO:0005886">
    <property type="term" value="C:plasma membrane"/>
    <property type="evidence" value="ECO:0007669"/>
    <property type="project" value="UniProtKB-SubCell"/>
</dbReference>
<dbReference type="GO" id="GO:0050897">
    <property type="term" value="F:cobalt ion binding"/>
    <property type="evidence" value="ECO:0007669"/>
    <property type="project" value="TreeGrafter"/>
</dbReference>
<dbReference type="GO" id="GO:0015087">
    <property type="term" value="F:cobalt ion transmembrane transporter activity"/>
    <property type="evidence" value="ECO:0007669"/>
    <property type="project" value="TreeGrafter"/>
</dbReference>
<dbReference type="GO" id="GO:0000287">
    <property type="term" value="F:magnesium ion binding"/>
    <property type="evidence" value="ECO:0007669"/>
    <property type="project" value="TreeGrafter"/>
</dbReference>
<dbReference type="GO" id="GO:0015095">
    <property type="term" value="F:magnesium ion transmembrane transporter activity"/>
    <property type="evidence" value="ECO:0007669"/>
    <property type="project" value="TreeGrafter"/>
</dbReference>
<dbReference type="GO" id="GO:0005385">
    <property type="term" value="F:zinc ion transmembrane transporter activity"/>
    <property type="evidence" value="ECO:0007669"/>
    <property type="project" value="UniProtKB-UniRule"/>
</dbReference>
<dbReference type="CDD" id="cd12833">
    <property type="entry name" value="ZntB-like_1"/>
    <property type="match status" value="1"/>
</dbReference>
<dbReference type="FunFam" id="1.20.58.340:FF:000002">
    <property type="entry name" value="Zinc transport protein ZntB"/>
    <property type="match status" value="1"/>
</dbReference>
<dbReference type="FunFam" id="1.20.58.340:FF:000003">
    <property type="entry name" value="Zinc transport protein ZntB"/>
    <property type="match status" value="1"/>
</dbReference>
<dbReference type="FunFam" id="3.30.460.20:FF:000001">
    <property type="entry name" value="Zinc transport protein ZntB"/>
    <property type="match status" value="1"/>
</dbReference>
<dbReference type="Gene3D" id="3.30.460.20">
    <property type="entry name" value="CorA soluble domain-like"/>
    <property type="match status" value="1"/>
</dbReference>
<dbReference type="Gene3D" id="1.20.58.340">
    <property type="entry name" value="Magnesium transport protein CorA, transmembrane region"/>
    <property type="match status" value="2"/>
</dbReference>
<dbReference type="HAMAP" id="MF_01565">
    <property type="entry name" value="ZntB"/>
    <property type="match status" value="1"/>
</dbReference>
<dbReference type="InterPro" id="IPR045861">
    <property type="entry name" value="CorA_cytoplasmic_dom"/>
</dbReference>
<dbReference type="InterPro" id="IPR045863">
    <property type="entry name" value="CorA_TM1_TM2"/>
</dbReference>
<dbReference type="InterPro" id="IPR002523">
    <property type="entry name" value="MgTranspt_CorA/ZnTranspt_ZntB"/>
</dbReference>
<dbReference type="InterPro" id="IPR023714">
    <property type="entry name" value="Zn_transp_ZntB"/>
</dbReference>
<dbReference type="NCBIfam" id="NF007092">
    <property type="entry name" value="PRK09546.1"/>
    <property type="match status" value="1"/>
</dbReference>
<dbReference type="PANTHER" id="PTHR46494">
    <property type="entry name" value="CORA FAMILY METAL ION TRANSPORTER (EUROFUNG)"/>
    <property type="match status" value="1"/>
</dbReference>
<dbReference type="PANTHER" id="PTHR46494:SF3">
    <property type="entry name" value="ZINC TRANSPORT PROTEIN ZNTB"/>
    <property type="match status" value="1"/>
</dbReference>
<dbReference type="Pfam" id="PF01544">
    <property type="entry name" value="CorA"/>
    <property type="match status" value="1"/>
</dbReference>
<dbReference type="SUPFAM" id="SSF143865">
    <property type="entry name" value="CorA soluble domain-like"/>
    <property type="match status" value="1"/>
</dbReference>
<dbReference type="SUPFAM" id="SSF144083">
    <property type="entry name" value="Magnesium transport protein CorA, transmembrane region"/>
    <property type="match status" value="1"/>
</dbReference>
<evidence type="ECO:0000255" key="1">
    <source>
        <dbReference type="HAMAP-Rule" id="MF_01565"/>
    </source>
</evidence>
<sequence length="327" mass="36612">MEAIKGSDVNVPDAVFAWMLDGRGGVKPLENTDVIDEAHPCWLHLNYVHHDSAQWLATTPLLPNNVRDALAGESTRPRVSRLGEGTLITLRCINGSTDERPDQLVAMRVYMDGRLIVSTRQRKVLALDDVVSDLEEGTGPTDCGGWLVDVCDALTDHSSEFIEQLHDKIIDLEDNLLDQQIPPRGFLALLRKQLIVMRRYMAPQRDVYARLASERLPWMSDDQRRRMQDIADRLGRGLDEIDACIARTGVMADEIAQVMQENLARRTYTMSLMAMVFLPSTFLTGLFGVNLGGIPGGGWQFGFSIFCILLVVLIGGVALWLHRSKWL</sequence>
<protein>
    <recommendedName>
        <fullName evidence="1">Zinc transport protein ZntB</fullName>
    </recommendedName>
</protein>
<keyword id="KW-0997">Cell inner membrane</keyword>
<keyword id="KW-1003">Cell membrane</keyword>
<keyword id="KW-0406">Ion transport</keyword>
<keyword id="KW-0472">Membrane</keyword>
<keyword id="KW-0812">Transmembrane</keyword>
<keyword id="KW-1133">Transmembrane helix</keyword>
<keyword id="KW-0813">Transport</keyword>
<keyword id="KW-0862">Zinc</keyword>
<feature type="chain" id="PRO_1000087821" description="Zinc transport protein ZntB">
    <location>
        <begin position="1"/>
        <end position="327"/>
    </location>
</feature>
<feature type="topological domain" description="Cytoplasmic" evidence="1">
    <location>
        <begin position="1"/>
        <end position="273"/>
    </location>
</feature>
<feature type="transmembrane region" description="Helical" evidence="1">
    <location>
        <begin position="274"/>
        <end position="294"/>
    </location>
</feature>
<feature type="topological domain" description="Periplasmic" evidence="1">
    <location>
        <begin position="295"/>
        <end position="300"/>
    </location>
</feature>
<feature type="transmembrane region" description="Helical" evidence="1">
    <location>
        <begin position="301"/>
        <end position="321"/>
    </location>
</feature>
<feature type="topological domain" description="Cytoplasmic" evidence="1">
    <location>
        <begin position="322"/>
        <end position="327"/>
    </location>
</feature>
<organism>
    <name type="scientific">Escherichia coli (strain ATCC 8739 / DSM 1576 / NBRC 3972 / NCIMB 8545 / WDCM 00012 / Crooks)</name>
    <dbReference type="NCBI Taxonomy" id="481805"/>
    <lineage>
        <taxon>Bacteria</taxon>
        <taxon>Pseudomonadati</taxon>
        <taxon>Pseudomonadota</taxon>
        <taxon>Gammaproteobacteria</taxon>
        <taxon>Enterobacterales</taxon>
        <taxon>Enterobacteriaceae</taxon>
        <taxon>Escherichia</taxon>
    </lineage>
</organism>
<reference key="1">
    <citation type="submission" date="2008-02" db="EMBL/GenBank/DDBJ databases">
        <title>Complete sequence of Escherichia coli C str. ATCC 8739.</title>
        <authorList>
            <person name="Copeland A."/>
            <person name="Lucas S."/>
            <person name="Lapidus A."/>
            <person name="Glavina del Rio T."/>
            <person name="Dalin E."/>
            <person name="Tice H."/>
            <person name="Bruce D."/>
            <person name="Goodwin L."/>
            <person name="Pitluck S."/>
            <person name="Kiss H."/>
            <person name="Brettin T."/>
            <person name="Detter J.C."/>
            <person name="Han C."/>
            <person name="Kuske C.R."/>
            <person name="Schmutz J."/>
            <person name="Larimer F."/>
            <person name="Land M."/>
            <person name="Hauser L."/>
            <person name="Kyrpides N."/>
            <person name="Mikhailova N."/>
            <person name="Ingram L."/>
            <person name="Richardson P."/>
        </authorList>
    </citation>
    <scope>NUCLEOTIDE SEQUENCE [LARGE SCALE GENOMIC DNA]</scope>
    <source>
        <strain>ATCC 8739 / DSM 1576 / NBRC 3972 / NCIMB 8545 / WDCM 00012 / Crooks</strain>
    </source>
</reference>
<proteinExistence type="inferred from homology"/>
<gene>
    <name evidence="1" type="primary">zntB</name>
    <name type="ordered locus">EcolC_2283</name>
</gene>
<name>ZNTB_ECOLC</name>
<comment type="function">
    <text evidence="1">Zinc transporter. Acts as a Zn(2+):proton symporter, which likely mediates zinc ion uptake.</text>
</comment>
<comment type="catalytic activity">
    <reaction evidence="1">
        <text>Zn(2+)(out) + H(+)(out) = Zn(2+)(in) + H(+)(in)</text>
        <dbReference type="Rhea" id="RHEA:71195"/>
        <dbReference type="ChEBI" id="CHEBI:15378"/>
        <dbReference type="ChEBI" id="CHEBI:29105"/>
    </reaction>
    <physiologicalReaction direction="left-to-right" evidence="1">
        <dbReference type="Rhea" id="RHEA:71196"/>
    </physiologicalReaction>
</comment>
<comment type="subcellular location">
    <subcellularLocation>
        <location evidence="1">Cell inner membrane</location>
        <topology evidence="1">Multi-pass membrane protein</topology>
    </subcellularLocation>
</comment>
<comment type="similarity">
    <text evidence="1">Belongs to the CorA metal ion transporter (MIT) (TC 1.A.35) family.</text>
</comment>